<accession>P41993</accession>
<accession>Q5WRU5</accession>
<evidence type="ECO:0000255" key="1">
    <source>
        <dbReference type="PROSITE-ProRule" id="PRU00410"/>
    </source>
</evidence>
<evidence type="ECO:0000256" key="2">
    <source>
        <dbReference type="SAM" id="MobiDB-lite"/>
    </source>
</evidence>
<keyword id="KW-1185">Reference proteome</keyword>
<dbReference type="EMBL" id="FO080148">
    <property type="protein sequence ID" value="CCD61599.1"/>
    <property type="molecule type" value="Genomic_DNA"/>
</dbReference>
<dbReference type="RefSeq" id="NP_498557.3">
    <property type="nucleotide sequence ID" value="NM_066156.5"/>
</dbReference>
<dbReference type="FunCoup" id="P41993">
    <property type="interactions" value="144"/>
</dbReference>
<dbReference type="STRING" id="6239.B0280.2.1"/>
<dbReference type="PaxDb" id="6239-B0280.2"/>
<dbReference type="EnsemblMetazoa" id="B0280.2.1">
    <property type="protein sequence ID" value="B0280.2.1"/>
    <property type="gene ID" value="WBGene00015100"/>
</dbReference>
<dbReference type="GeneID" id="175996"/>
<dbReference type="KEGG" id="cel:CELE_B0280.2"/>
<dbReference type="UCSC" id="B0280.2">
    <property type="organism name" value="c. elegans"/>
</dbReference>
<dbReference type="AGR" id="WB:WBGene00015100"/>
<dbReference type="CTD" id="175996"/>
<dbReference type="WormBase" id="B0280.2">
    <property type="protein sequence ID" value="CE37473"/>
    <property type="gene ID" value="WBGene00015100"/>
</dbReference>
<dbReference type="eggNOG" id="ENOG502TGKT">
    <property type="taxonomic scope" value="Eukaryota"/>
</dbReference>
<dbReference type="GeneTree" id="ENSGT00730000110895"/>
<dbReference type="HOGENOM" id="CLU_014062_0_0_1"/>
<dbReference type="InParanoid" id="P41993"/>
<dbReference type="OrthoDB" id="5847350at2759"/>
<dbReference type="PhylomeDB" id="P41993"/>
<dbReference type="PRO" id="PR:P41993"/>
<dbReference type="Proteomes" id="UP000001940">
    <property type="component" value="Chromosome III"/>
</dbReference>
<dbReference type="Bgee" id="WBGene00015100">
    <property type="expression patterns" value="Expressed in adult organism and 1 other cell type or tissue"/>
</dbReference>
<dbReference type="GO" id="GO:0005737">
    <property type="term" value="C:cytoplasm"/>
    <property type="evidence" value="ECO:0000318"/>
    <property type="project" value="GO_Central"/>
</dbReference>
<dbReference type="GO" id="GO:0005634">
    <property type="term" value="C:nucleus"/>
    <property type="evidence" value="ECO:0000318"/>
    <property type="project" value="GO_Central"/>
</dbReference>
<dbReference type="FunFam" id="2.30.29.30:FF:000712">
    <property type="entry name" value="Virus Induced Reporter Off"/>
    <property type="match status" value="1"/>
</dbReference>
<dbReference type="Gene3D" id="2.30.29.30">
    <property type="entry name" value="Pleckstrin-homology domain (PH domain)/Phosphotyrosine-binding domain (PTB)"/>
    <property type="match status" value="1"/>
</dbReference>
<dbReference type="InterPro" id="IPR011993">
    <property type="entry name" value="PH-like_dom_sf"/>
</dbReference>
<dbReference type="InterPro" id="IPR000697">
    <property type="entry name" value="WH1/EVH1_dom"/>
</dbReference>
<dbReference type="SMART" id="SM00461">
    <property type="entry name" value="WH1"/>
    <property type="match status" value="1"/>
</dbReference>
<dbReference type="SUPFAM" id="SSF50729">
    <property type="entry name" value="PH domain-like"/>
    <property type="match status" value="1"/>
</dbReference>
<dbReference type="PROSITE" id="PS50229">
    <property type="entry name" value="WH1"/>
    <property type="match status" value="1"/>
</dbReference>
<organism>
    <name type="scientific">Caenorhabditis elegans</name>
    <dbReference type="NCBI Taxonomy" id="6239"/>
    <lineage>
        <taxon>Eukaryota</taxon>
        <taxon>Metazoa</taxon>
        <taxon>Ecdysozoa</taxon>
        <taxon>Nematoda</taxon>
        <taxon>Chromadorea</taxon>
        <taxon>Rhabditida</taxon>
        <taxon>Rhabditina</taxon>
        <taxon>Rhabditomorpha</taxon>
        <taxon>Rhabditoidea</taxon>
        <taxon>Rhabditidae</taxon>
        <taxon>Peloderinae</taxon>
        <taxon>Caenorhabditis</taxon>
    </lineage>
</organism>
<protein>
    <recommendedName>
        <fullName>Uncharacterized protein B0280.2</fullName>
    </recommendedName>
</protein>
<reference key="1">
    <citation type="journal article" date="1998" name="Science">
        <title>Genome sequence of the nematode C. elegans: a platform for investigating biology.</title>
        <authorList>
            <consortium name="The C. elegans sequencing consortium"/>
        </authorList>
    </citation>
    <scope>NUCLEOTIDE SEQUENCE [LARGE SCALE GENOMIC DNA]</scope>
    <source>
        <strain>Bristol N2</strain>
    </source>
</reference>
<name>YKC2_CAEEL</name>
<feature type="chain" id="PRO_0000065054" description="Uncharacterized protein B0280.2">
    <location>
        <begin position="1"/>
        <end position="627"/>
    </location>
</feature>
<feature type="domain" description="WH1" evidence="1">
    <location>
        <begin position="21"/>
        <end position="136"/>
    </location>
</feature>
<feature type="region of interest" description="Disordered" evidence="2">
    <location>
        <begin position="310"/>
        <end position="347"/>
    </location>
</feature>
<proteinExistence type="predicted"/>
<sequence>MITSELSDFLEINEKNSVLRGISASDKILSSGICQLLFSENGHWRIPNGGTAVALFLKNSTERYYRIIVMEPSADPDWEPTVQFDFLIRDKKFETMQEHARLLVFEAESRYIGLNFYDSKECENFHNSVCKRQTRSTDKAKQPALEGKTKKKSSFFHDPFKSHREPRKQVEIEAPTDFRHVDGVKLTDVQEDLYMQVNNPEEEEIVKQLIVRNEDHIRQSLMVKKESQTVKEVKDKNKDKVKTSKSFFGRNKPKVEDVSQPIVPVITGDPLNPDWTVTAATSFKHSHTFSADPIKDPSVLLNRSTSVRVRGSLSTPRIPTHRDSYRSATKPDTVPKQTPPPTHNSYVLPHIDERMTRKMILMKNHQNLREEVLPFELEVGNYVSFPNHTHCSEKPIAEAPLRPPVRPAPIVPTSAGLCLVLAASFPTSSTPSRFLNPFPAPLPAESFFGNSKSKIAYFIKPTNEQPQELFQTPVQIEKIFSSTPSSPVSNAAIIDGMKNISLSDSSTSVAQDIAMKVPTPLPRTSKIISASSPLPPSQDEINPLIEMVDQSSSKSETQIPVTECSQSHLNGKGSAAQIQSADFDKVLNQLLSIKVNSEKSKQSADLELLLVSIEKLIQNYLGFHHED</sequence>
<gene>
    <name type="ORF">B0280.2</name>
</gene>